<evidence type="ECO:0000255" key="1">
    <source>
        <dbReference type="HAMAP-Rule" id="MF_00384"/>
    </source>
</evidence>
<comment type="function">
    <text evidence="1">Catalyzes the ATP-dependent phosphorylation of L-homoserine to L-homoserine phosphate.</text>
</comment>
<comment type="catalytic activity">
    <reaction evidence="1">
        <text>L-homoserine + ATP = O-phospho-L-homoserine + ADP + H(+)</text>
        <dbReference type="Rhea" id="RHEA:13985"/>
        <dbReference type="ChEBI" id="CHEBI:15378"/>
        <dbReference type="ChEBI" id="CHEBI:30616"/>
        <dbReference type="ChEBI" id="CHEBI:57476"/>
        <dbReference type="ChEBI" id="CHEBI:57590"/>
        <dbReference type="ChEBI" id="CHEBI:456216"/>
        <dbReference type="EC" id="2.7.1.39"/>
    </reaction>
</comment>
<comment type="pathway">
    <text evidence="1">Amino-acid biosynthesis; L-threonine biosynthesis; L-threonine from L-aspartate: step 4/5.</text>
</comment>
<comment type="subcellular location">
    <subcellularLocation>
        <location evidence="1">Cytoplasm</location>
    </subcellularLocation>
</comment>
<comment type="similarity">
    <text evidence="1">Belongs to the GHMP kinase family. Homoserine kinase subfamily.</text>
</comment>
<name>KHSE_DEIRA</name>
<organism>
    <name type="scientific">Deinococcus radiodurans (strain ATCC 13939 / DSM 20539 / JCM 16871 / CCUG 27074 / LMG 4051 / NBRC 15346 / NCIMB 9279 / VKM B-1422 / R1)</name>
    <dbReference type="NCBI Taxonomy" id="243230"/>
    <lineage>
        <taxon>Bacteria</taxon>
        <taxon>Thermotogati</taxon>
        <taxon>Deinococcota</taxon>
        <taxon>Deinococci</taxon>
        <taxon>Deinococcales</taxon>
        <taxon>Deinococcaceae</taxon>
        <taxon>Deinococcus</taxon>
    </lineage>
</organism>
<keyword id="KW-0028">Amino-acid biosynthesis</keyword>
<keyword id="KW-0067">ATP-binding</keyword>
<keyword id="KW-0963">Cytoplasm</keyword>
<keyword id="KW-0418">Kinase</keyword>
<keyword id="KW-0547">Nucleotide-binding</keyword>
<keyword id="KW-1185">Reference proteome</keyword>
<keyword id="KW-0791">Threonine biosynthesis</keyword>
<keyword id="KW-0808">Transferase</keyword>
<feature type="chain" id="PRO_0000156566" description="Homoserine kinase">
    <location>
        <begin position="1"/>
        <end position="307"/>
    </location>
</feature>
<feature type="binding site" evidence="1">
    <location>
        <begin position="91"/>
        <end position="101"/>
    </location>
    <ligand>
        <name>ATP</name>
        <dbReference type="ChEBI" id="CHEBI:30616"/>
    </ligand>
</feature>
<proteinExistence type="inferred from homology"/>
<dbReference type="EC" id="2.7.1.39" evidence="1"/>
<dbReference type="EMBL" id="AE000513">
    <property type="protein sequence ID" value="AAF11935.1"/>
    <property type="molecule type" value="Genomic_DNA"/>
</dbReference>
<dbReference type="PIR" id="G75280">
    <property type="entry name" value="G75280"/>
</dbReference>
<dbReference type="RefSeq" id="NP_296111.1">
    <property type="nucleotide sequence ID" value="NC_001263.1"/>
</dbReference>
<dbReference type="RefSeq" id="WP_010889016.1">
    <property type="nucleotide sequence ID" value="NC_001263.1"/>
</dbReference>
<dbReference type="SMR" id="Q9RRU5"/>
<dbReference type="FunCoup" id="Q9RRU5">
    <property type="interactions" value="318"/>
</dbReference>
<dbReference type="STRING" id="243230.DR_2390"/>
<dbReference type="PaxDb" id="243230-DR_2390"/>
<dbReference type="EnsemblBacteria" id="AAF11935">
    <property type="protein sequence ID" value="AAF11935"/>
    <property type="gene ID" value="DR_2390"/>
</dbReference>
<dbReference type="GeneID" id="69518641"/>
<dbReference type="KEGG" id="dra:DR_2390"/>
<dbReference type="PATRIC" id="fig|243230.17.peg.2626"/>
<dbReference type="eggNOG" id="COG0083">
    <property type="taxonomic scope" value="Bacteria"/>
</dbReference>
<dbReference type="HOGENOM" id="CLU_041243_0_2_0"/>
<dbReference type="InParanoid" id="Q9RRU5"/>
<dbReference type="OrthoDB" id="9769912at2"/>
<dbReference type="UniPathway" id="UPA00050">
    <property type="reaction ID" value="UER00064"/>
</dbReference>
<dbReference type="Proteomes" id="UP000002524">
    <property type="component" value="Chromosome 1"/>
</dbReference>
<dbReference type="GO" id="GO:0005737">
    <property type="term" value="C:cytoplasm"/>
    <property type="evidence" value="ECO:0007669"/>
    <property type="project" value="UniProtKB-SubCell"/>
</dbReference>
<dbReference type="GO" id="GO:0005524">
    <property type="term" value="F:ATP binding"/>
    <property type="evidence" value="ECO:0007669"/>
    <property type="project" value="UniProtKB-UniRule"/>
</dbReference>
<dbReference type="GO" id="GO:0004413">
    <property type="term" value="F:homoserine kinase activity"/>
    <property type="evidence" value="ECO:0007669"/>
    <property type="project" value="UniProtKB-UniRule"/>
</dbReference>
<dbReference type="GO" id="GO:0009088">
    <property type="term" value="P:threonine biosynthetic process"/>
    <property type="evidence" value="ECO:0007669"/>
    <property type="project" value="UniProtKB-UniRule"/>
</dbReference>
<dbReference type="Gene3D" id="3.30.230.10">
    <property type="match status" value="1"/>
</dbReference>
<dbReference type="Gene3D" id="3.30.70.890">
    <property type="entry name" value="GHMP kinase, C-terminal domain"/>
    <property type="match status" value="1"/>
</dbReference>
<dbReference type="HAMAP" id="MF_00384">
    <property type="entry name" value="Homoser_kinase"/>
    <property type="match status" value="1"/>
</dbReference>
<dbReference type="InterPro" id="IPR013750">
    <property type="entry name" value="GHMP_kinase_C_dom"/>
</dbReference>
<dbReference type="InterPro" id="IPR036554">
    <property type="entry name" value="GHMP_kinase_C_sf"/>
</dbReference>
<dbReference type="InterPro" id="IPR006204">
    <property type="entry name" value="GHMP_kinase_N_dom"/>
</dbReference>
<dbReference type="InterPro" id="IPR006203">
    <property type="entry name" value="GHMP_knse_ATP-bd_CS"/>
</dbReference>
<dbReference type="InterPro" id="IPR000870">
    <property type="entry name" value="Homoserine_kinase"/>
</dbReference>
<dbReference type="InterPro" id="IPR020568">
    <property type="entry name" value="Ribosomal_Su5_D2-typ_SF"/>
</dbReference>
<dbReference type="InterPro" id="IPR014721">
    <property type="entry name" value="Ribsml_uS5_D2-typ_fold_subgr"/>
</dbReference>
<dbReference type="NCBIfam" id="TIGR00191">
    <property type="entry name" value="thrB"/>
    <property type="match status" value="1"/>
</dbReference>
<dbReference type="PANTHER" id="PTHR20861:SF1">
    <property type="entry name" value="HOMOSERINE KINASE"/>
    <property type="match status" value="1"/>
</dbReference>
<dbReference type="PANTHER" id="PTHR20861">
    <property type="entry name" value="HOMOSERINE/4-DIPHOSPHOCYTIDYL-2-C-METHYL-D-ERYTHRITOL KINASE"/>
    <property type="match status" value="1"/>
</dbReference>
<dbReference type="Pfam" id="PF08544">
    <property type="entry name" value="GHMP_kinases_C"/>
    <property type="match status" value="1"/>
</dbReference>
<dbReference type="Pfam" id="PF00288">
    <property type="entry name" value="GHMP_kinases_N"/>
    <property type="match status" value="1"/>
</dbReference>
<dbReference type="PIRSF" id="PIRSF000676">
    <property type="entry name" value="Homoser_kin"/>
    <property type="match status" value="1"/>
</dbReference>
<dbReference type="PRINTS" id="PR00958">
    <property type="entry name" value="HOMSERKINASE"/>
</dbReference>
<dbReference type="SUPFAM" id="SSF55060">
    <property type="entry name" value="GHMP Kinase, C-terminal domain"/>
    <property type="match status" value="1"/>
</dbReference>
<dbReference type="SUPFAM" id="SSF54211">
    <property type="entry name" value="Ribosomal protein S5 domain 2-like"/>
    <property type="match status" value="1"/>
</dbReference>
<dbReference type="PROSITE" id="PS00627">
    <property type="entry name" value="GHMP_KINASES_ATP"/>
    <property type="match status" value="1"/>
</dbReference>
<sequence length="307" mass="32390">MSSPARPFTVRAPASSANLGPGFDSLGLSVPLYTTLRVTPQDKAEVVPLGTELADTPADESNYVYRAMTLAAKRAGRTLPPARVEIETEVPLARGLGSSAAALVAGVVAGNELLGRPLDDETVLDVTAREEGHPDNVAPALFGGIVVATLDKLGTHYVRLDPPAHLGVTVLVPDFELSTSKARAVLPREYSRADTVHALSHAALLAAALAQGRLDLLRHAMQDYVHQVWRAPLVPGLSDILEHAHEYGALGAALSGAGPTVLCFHDQRGSTATLHHYLHDVMTKNGLSGRVMDFPIDAAGTVVEHAK</sequence>
<accession>Q9RRU5</accession>
<reference key="1">
    <citation type="journal article" date="1999" name="Science">
        <title>Genome sequence of the radioresistant bacterium Deinococcus radiodurans R1.</title>
        <authorList>
            <person name="White O."/>
            <person name="Eisen J.A."/>
            <person name="Heidelberg J.F."/>
            <person name="Hickey E.K."/>
            <person name="Peterson J.D."/>
            <person name="Dodson R.J."/>
            <person name="Haft D.H."/>
            <person name="Gwinn M.L."/>
            <person name="Nelson W.C."/>
            <person name="Richardson D.L."/>
            <person name="Moffat K.S."/>
            <person name="Qin H."/>
            <person name="Jiang L."/>
            <person name="Pamphile W."/>
            <person name="Crosby M."/>
            <person name="Shen M."/>
            <person name="Vamathevan J.J."/>
            <person name="Lam P."/>
            <person name="McDonald L.A."/>
            <person name="Utterback T.R."/>
            <person name="Zalewski C."/>
            <person name="Makarova K.S."/>
            <person name="Aravind L."/>
            <person name="Daly M.J."/>
            <person name="Minton K.W."/>
            <person name="Fleischmann R.D."/>
            <person name="Ketchum K.A."/>
            <person name="Nelson K.E."/>
            <person name="Salzberg S.L."/>
            <person name="Smith H.O."/>
            <person name="Venter J.C."/>
            <person name="Fraser C.M."/>
        </authorList>
    </citation>
    <scope>NUCLEOTIDE SEQUENCE [LARGE SCALE GENOMIC DNA]</scope>
    <source>
        <strain>ATCC 13939 / DSM 20539 / JCM 16871 / CCUG 27074 / LMG 4051 / NBRC 15346 / NCIMB 9279 / VKM B-1422 / R1</strain>
    </source>
</reference>
<gene>
    <name evidence="1" type="primary">thrB</name>
    <name type="ordered locus">DR_2390</name>
</gene>
<protein>
    <recommendedName>
        <fullName evidence="1">Homoserine kinase</fullName>
        <shortName evidence="1">HK</shortName>
        <shortName evidence="1">HSK</shortName>
        <ecNumber evidence="1">2.7.1.39</ecNumber>
    </recommendedName>
</protein>